<sequence>MQIFVKTLTGKTITLEVESSDTIDNVKAKIQDKEGIPPDQQRLIFAGKQLEDGRTLADYNIQKESTLHLVLRLRGGAKKRKKKTYTKPKKQKHKHKKVKLAVLQFYKVDDSTGKVTRLRKECPNADCGAGTFMANHFDRHYCGKCGLTYVYNQKA</sequence>
<reference key="1">
    <citation type="journal article" date="1990" name="Gene">
        <title>Two ubiquitin-long-tail fusion genes arranged as closely spaced direct repeats in barley.</title>
        <authorList>
            <person name="Gausing K."/>
            <person name="Jensen C.B."/>
        </authorList>
    </citation>
    <scope>NUCLEOTIDE SEQUENCE [GENOMIC DNA]</scope>
    <source>
        <strain>cv. Bomi</strain>
    </source>
</reference>
<protein>
    <recommendedName>
        <fullName evidence="3">Ubiquitin-ribosomal protein eS31y fusion protein</fullName>
    </recommendedName>
    <component>
        <recommendedName>
            <fullName>Ubiquitin</fullName>
        </recommendedName>
    </component>
    <component>
        <recommendedName>
            <fullName evidence="3">Small ribosomal subunit protein eS31y</fullName>
        </recommendedName>
        <alternativeName>
            <fullName>40S ribosomal protein S27a</fullName>
        </alternativeName>
    </component>
</protein>
<proteinExistence type="inferred from homology"/>
<organism>
    <name type="scientific">Hordeum vulgare</name>
    <name type="common">Barley</name>
    <dbReference type="NCBI Taxonomy" id="4513"/>
    <lineage>
        <taxon>Eukaryota</taxon>
        <taxon>Viridiplantae</taxon>
        <taxon>Streptophyta</taxon>
        <taxon>Embryophyta</taxon>
        <taxon>Tracheophyta</taxon>
        <taxon>Spermatophyta</taxon>
        <taxon>Magnoliopsida</taxon>
        <taxon>Liliopsida</taxon>
        <taxon>Poales</taxon>
        <taxon>Poaceae</taxon>
        <taxon>BOP clade</taxon>
        <taxon>Pooideae</taxon>
        <taxon>Triticodae</taxon>
        <taxon>Triticeae</taxon>
        <taxon>Hordeinae</taxon>
        <taxon>Hordeum</taxon>
    </lineage>
</organism>
<accession>P0CG87</accession>
<accession>O82079</accession>
<accession>P03993</accession>
<accession>P22277</accession>
<accession>P69314</accession>
<dbReference type="EMBL" id="M60176">
    <property type="protein sequence ID" value="AAA62699.1"/>
    <property type="molecule type" value="Genomic_DNA"/>
</dbReference>
<dbReference type="PIR" id="JH0227">
    <property type="entry name" value="JH0227"/>
</dbReference>
<dbReference type="SMR" id="P0CG87"/>
<dbReference type="ExpressionAtlas" id="P0CG87">
    <property type="expression patterns" value="baseline and differential"/>
</dbReference>
<dbReference type="GO" id="GO:0005737">
    <property type="term" value="C:cytoplasm"/>
    <property type="evidence" value="ECO:0007669"/>
    <property type="project" value="UniProtKB-SubCell"/>
</dbReference>
<dbReference type="GO" id="GO:0005634">
    <property type="term" value="C:nucleus"/>
    <property type="evidence" value="ECO:0007669"/>
    <property type="project" value="UniProtKB-SubCell"/>
</dbReference>
<dbReference type="GO" id="GO:1990904">
    <property type="term" value="C:ribonucleoprotein complex"/>
    <property type="evidence" value="ECO:0007669"/>
    <property type="project" value="UniProtKB-KW"/>
</dbReference>
<dbReference type="GO" id="GO:0005840">
    <property type="term" value="C:ribosome"/>
    <property type="evidence" value="ECO:0007669"/>
    <property type="project" value="UniProtKB-KW"/>
</dbReference>
<dbReference type="GO" id="GO:0003729">
    <property type="term" value="F:mRNA binding"/>
    <property type="evidence" value="ECO:0007669"/>
    <property type="project" value="UniProtKB-ARBA"/>
</dbReference>
<dbReference type="GO" id="GO:0003735">
    <property type="term" value="F:structural constituent of ribosome"/>
    <property type="evidence" value="ECO:0007669"/>
    <property type="project" value="InterPro"/>
</dbReference>
<dbReference type="GO" id="GO:0008270">
    <property type="term" value="F:zinc ion binding"/>
    <property type="evidence" value="ECO:0007669"/>
    <property type="project" value="UniProtKB-KW"/>
</dbReference>
<dbReference type="GO" id="GO:0006412">
    <property type="term" value="P:translation"/>
    <property type="evidence" value="ECO:0007669"/>
    <property type="project" value="InterPro"/>
</dbReference>
<dbReference type="CDD" id="cd01803">
    <property type="entry name" value="Ubl_ubiquitin"/>
    <property type="match status" value="1"/>
</dbReference>
<dbReference type="FunFam" id="3.10.20.90:FF:000008">
    <property type="entry name" value="Ubiquitin-40S ribosomal protein S27a"/>
    <property type="match status" value="1"/>
</dbReference>
<dbReference type="Gene3D" id="6.20.50.150">
    <property type="match status" value="1"/>
</dbReference>
<dbReference type="Gene3D" id="3.10.20.90">
    <property type="entry name" value="Phosphatidylinositol 3-kinase Catalytic Subunit, Chain A, domain 1"/>
    <property type="match status" value="1"/>
</dbReference>
<dbReference type="InterPro" id="IPR002906">
    <property type="entry name" value="Ribosomal_eS31"/>
</dbReference>
<dbReference type="InterPro" id="IPR038582">
    <property type="entry name" value="Ribosomal_eS31_euk-type_sf"/>
</dbReference>
<dbReference type="InterPro" id="IPR011332">
    <property type="entry name" value="Ribosomal_zn-bd"/>
</dbReference>
<dbReference type="InterPro" id="IPR000626">
    <property type="entry name" value="Ubiquitin-like_dom"/>
</dbReference>
<dbReference type="InterPro" id="IPR029071">
    <property type="entry name" value="Ubiquitin-like_domsf"/>
</dbReference>
<dbReference type="InterPro" id="IPR019954">
    <property type="entry name" value="Ubiquitin_CS"/>
</dbReference>
<dbReference type="InterPro" id="IPR019956">
    <property type="entry name" value="Ubiquitin_dom"/>
</dbReference>
<dbReference type="InterPro" id="IPR050158">
    <property type="entry name" value="Ubiquitin_ubiquitin-like"/>
</dbReference>
<dbReference type="PANTHER" id="PTHR10666">
    <property type="entry name" value="UBIQUITIN"/>
    <property type="match status" value="1"/>
</dbReference>
<dbReference type="Pfam" id="PF01599">
    <property type="entry name" value="Ribosomal_S27"/>
    <property type="match status" value="1"/>
</dbReference>
<dbReference type="Pfam" id="PF00240">
    <property type="entry name" value="ubiquitin"/>
    <property type="match status" value="1"/>
</dbReference>
<dbReference type="PRINTS" id="PR00348">
    <property type="entry name" value="UBIQUITIN"/>
</dbReference>
<dbReference type="SMART" id="SM01402">
    <property type="entry name" value="Ribosomal_S27"/>
    <property type="match status" value="1"/>
</dbReference>
<dbReference type="SMART" id="SM00213">
    <property type="entry name" value="UBQ"/>
    <property type="match status" value="1"/>
</dbReference>
<dbReference type="SUPFAM" id="SSF54236">
    <property type="entry name" value="Ubiquitin-like"/>
    <property type="match status" value="1"/>
</dbReference>
<dbReference type="SUPFAM" id="SSF57829">
    <property type="entry name" value="Zn-binding ribosomal proteins"/>
    <property type="match status" value="1"/>
</dbReference>
<dbReference type="PROSITE" id="PS00299">
    <property type="entry name" value="UBIQUITIN_1"/>
    <property type="match status" value="1"/>
</dbReference>
<dbReference type="PROSITE" id="PS50053">
    <property type="entry name" value="UBIQUITIN_2"/>
    <property type="match status" value="1"/>
</dbReference>
<gene>
    <name type="primary">MUB2</name>
    <name type="synonym">RPS27A2</name>
</gene>
<name>RS272_HORVU</name>
<feature type="chain" id="PRO_0000396522" description="Ubiquitin">
    <location>
        <begin position="1"/>
        <end position="76"/>
    </location>
</feature>
<feature type="chain" id="PRO_0000396523" description="Small ribosomal subunit protein eS31y">
    <location>
        <begin position="77"/>
        <end position="155"/>
    </location>
</feature>
<feature type="domain" description="Ubiquitin-like" evidence="2">
    <location>
        <begin position="1"/>
        <end position="76"/>
    </location>
</feature>
<feature type="zinc finger region" description="C4-type">
    <location>
        <begin position="122"/>
        <end position="145"/>
    </location>
</feature>
<feature type="cross-link" description="Glycyl lysine isopeptide (Lys-Gly) (interchain with G-Cter in ubiquitin)" evidence="1">
    <location>
        <position position="48"/>
    </location>
</feature>
<feature type="cross-link" description="Glycyl lysine isopeptide (Gly-Lys) (interchain with K-? in acceptor proteins)" evidence="2">
    <location>
        <position position="76"/>
    </location>
</feature>
<comment type="function">
    <molecule>Ubiquitin</molecule>
    <text evidence="1">Exists either covalently attached to another protein, or free (unanchored). When covalently bound, it is conjugated to target proteins via an isopeptide bond either as a monomer (monoubiquitin), a polymer linked via different Lys residues of the ubiquitin (polyubiquitin chains) or a linear polymer linked via the initiator Met of the ubiquitin (linear polyubiquitin chains). Polyubiquitin chains, when attached to a target protein, have different functions depending on the Lys residue of the ubiquitin that is linked: Lys-48-linked is involved in protein degradation via the proteasome. Linear polymer chains formed via attachment by the initiator Met lead to cell signaling. Ubiquitin is usually conjugated to Lys residues of target proteins, however, in rare cases, conjugation to Cys or Ser residues has been observed. When polyubiquitin is free (unanchored-polyubiquitin), it also has distinct roles, such as in activation of protein kinases, and in signaling (By similarity).</text>
</comment>
<comment type="function">
    <molecule>Small ribosomal subunit protein eS31y</molecule>
    <text>Component of the 40S subunit of the ribosome.</text>
</comment>
<comment type="subunit">
    <molecule>Small ribosomal subunit protein eS31y</molecule>
    <text evidence="1">Part of the 40S ribosomal subunit.</text>
</comment>
<comment type="subcellular location">
    <molecule>Ubiquitin</molecule>
    <subcellularLocation>
        <location evidence="1">Cytoplasm</location>
    </subcellularLocation>
    <subcellularLocation>
        <location evidence="1">Nucleus</location>
    </subcellularLocation>
</comment>
<comment type="miscellaneous">
    <text>Ubiquitin is generally synthesized as a polyubiquitin precursor with tandem head to tail repeats. Often, there are one to three additional amino acids after the last repeat, removed in the mature protein. Alternatively, ubiquitin extension protein is synthesized as a single copy of ubiquitin fused to a ribosomal protein (either eL40 or eS31) or to an ubiquitin-related protein (either RUB1 or RUB2). Following translation, extension protein is cleaved from ubiquitin.</text>
</comment>
<comment type="similarity">
    <text evidence="3">In the N-terminal section; belongs to the ubiquitin family.</text>
</comment>
<comment type="similarity">
    <text evidence="3">In the C-terminal section; belongs to the eukaryotic ribosomal protein eS31 family.</text>
</comment>
<evidence type="ECO:0000250" key="1"/>
<evidence type="ECO:0000255" key="2">
    <source>
        <dbReference type="PROSITE-ProRule" id="PRU00214"/>
    </source>
</evidence>
<evidence type="ECO:0000305" key="3"/>
<keyword id="KW-0963">Cytoplasm</keyword>
<keyword id="KW-1017">Isopeptide bond</keyword>
<keyword id="KW-0479">Metal-binding</keyword>
<keyword id="KW-0539">Nucleus</keyword>
<keyword id="KW-0687">Ribonucleoprotein</keyword>
<keyword id="KW-0689">Ribosomal protein</keyword>
<keyword id="KW-0832">Ubl conjugation</keyword>
<keyword id="KW-0862">Zinc</keyword>
<keyword id="KW-0863">Zinc-finger</keyword>